<gene>
    <name evidence="1" type="primary">mnmG</name>
    <name evidence="1" type="synonym">gidA</name>
    <name type="ordered locus">CBUD_0198</name>
</gene>
<feature type="chain" id="PRO_1000076314" description="tRNA uridine 5-carboxymethylaminomethyl modification enzyme MnmG">
    <location>
        <begin position="1"/>
        <end position="627"/>
    </location>
</feature>
<feature type="binding site" evidence="1">
    <location>
        <begin position="14"/>
        <end position="19"/>
    </location>
    <ligand>
        <name>FAD</name>
        <dbReference type="ChEBI" id="CHEBI:57692"/>
    </ligand>
</feature>
<feature type="binding site" evidence="1">
    <location>
        <begin position="274"/>
        <end position="288"/>
    </location>
    <ligand>
        <name>NAD(+)</name>
        <dbReference type="ChEBI" id="CHEBI:57540"/>
    </ligand>
</feature>
<name>MNMG_COXBN</name>
<protein>
    <recommendedName>
        <fullName evidence="1">tRNA uridine 5-carboxymethylaminomethyl modification enzyme MnmG</fullName>
    </recommendedName>
    <alternativeName>
        <fullName evidence="1">Glucose-inhibited division protein A</fullName>
    </alternativeName>
</protein>
<organism>
    <name type="scientific">Coxiella burnetii (strain Dugway 5J108-111)</name>
    <dbReference type="NCBI Taxonomy" id="434922"/>
    <lineage>
        <taxon>Bacteria</taxon>
        <taxon>Pseudomonadati</taxon>
        <taxon>Pseudomonadota</taxon>
        <taxon>Gammaproteobacteria</taxon>
        <taxon>Legionellales</taxon>
        <taxon>Coxiellaceae</taxon>
        <taxon>Coxiella</taxon>
    </lineage>
</organism>
<sequence length="627" mass="69969">MQSTSQQFDVIVVGGGHAGTEAALVAARMGARTLLLTHNIETLGQMSCNPAIGGIGKSHLVKEIDALGGIMALAADQAGIHFRTLNARKGPAVRATRAQADRVLYKAAIHHALENQPHLWLFQQGVDDLIIQNNRAAGVVTQMGLAFYAPTVILTVGTFLGGKIHIGMNHYRGGRAGDPPALALAERLREMPFRVERLKTGTPPRIDGRTINYSQLIEQPSDQPLPLMSYWSHGEDRPRQVSCFITQTNEKTHDIIRNGLKTSPLFSGVIEGVGPRYCPSIEDKIVRFADRNSHQLFLEPEGLNTPEVYPNGVSTSLSFDVQLDFIHSIKGLEKCHITRPGYAIEYDYFDPRDLKPSLETKYVPGLYFAGQINGTTGYEEAAAQGLIAGINAALQIQERAPWTPARDEAYIGVLIDDLTTRGTNEPYRMFTSRAEYRLLLRQDNADLRLTEKGRDLGCVDDERWNFFVKKKETIEKEQQRLKKQRIWPKSTVAKAIESRFQQLLERDYSAMDLLRRPEINYPALMQIEELGPAVLEPSVAEQIDIQAKYEGYLTHQLAEIARQKKYQTAQIPSSLDYNQVTGLSNEVRQKLNETKPTTLGQASRIPGITPAAISLLLVHLKKKELYP</sequence>
<reference key="1">
    <citation type="journal article" date="2009" name="Infect. Immun.">
        <title>Comparative genomics reveal extensive transposon-mediated genomic plasticity and diversity among potential effector proteins within the genus Coxiella.</title>
        <authorList>
            <person name="Beare P.A."/>
            <person name="Unsworth N."/>
            <person name="Andoh M."/>
            <person name="Voth D.E."/>
            <person name="Omsland A."/>
            <person name="Gilk S.D."/>
            <person name="Williams K.P."/>
            <person name="Sobral B.W."/>
            <person name="Kupko J.J. III"/>
            <person name="Porcella S.F."/>
            <person name="Samuel J.E."/>
            <person name="Heinzen R.A."/>
        </authorList>
    </citation>
    <scope>NUCLEOTIDE SEQUENCE [LARGE SCALE GENOMIC DNA]</scope>
    <source>
        <strain>Dugway 5J108-111</strain>
    </source>
</reference>
<accession>A9KBS8</accession>
<keyword id="KW-0963">Cytoplasm</keyword>
<keyword id="KW-0274">FAD</keyword>
<keyword id="KW-0285">Flavoprotein</keyword>
<keyword id="KW-0520">NAD</keyword>
<keyword id="KW-0819">tRNA processing</keyword>
<dbReference type="EMBL" id="CP000733">
    <property type="protein sequence ID" value="ABS77904.1"/>
    <property type="molecule type" value="Genomic_DNA"/>
</dbReference>
<dbReference type="RefSeq" id="WP_010958541.1">
    <property type="nucleotide sequence ID" value="NC_009727.1"/>
</dbReference>
<dbReference type="SMR" id="A9KBS8"/>
<dbReference type="KEGG" id="cbd:CBUD_0198"/>
<dbReference type="HOGENOM" id="CLU_007831_2_2_6"/>
<dbReference type="Proteomes" id="UP000008555">
    <property type="component" value="Chromosome"/>
</dbReference>
<dbReference type="GO" id="GO:0005829">
    <property type="term" value="C:cytosol"/>
    <property type="evidence" value="ECO:0007669"/>
    <property type="project" value="TreeGrafter"/>
</dbReference>
<dbReference type="GO" id="GO:0050660">
    <property type="term" value="F:flavin adenine dinucleotide binding"/>
    <property type="evidence" value="ECO:0007669"/>
    <property type="project" value="UniProtKB-UniRule"/>
</dbReference>
<dbReference type="GO" id="GO:0030488">
    <property type="term" value="P:tRNA methylation"/>
    <property type="evidence" value="ECO:0007669"/>
    <property type="project" value="TreeGrafter"/>
</dbReference>
<dbReference type="GO" id="GO:0002098">
    <property type="term" value="P:tRNA wobble uridine modification"/>
    <property type="evidence" value="ECO:0007669"/>
    <property type="project" value="InterPro"/>
</dbReference>
<dbReference type="FunFam" id="1.10.10.1800:FF:000001">
    <property type="entry name" value="tRNA uridine 5-carboxymethylaminomethyl modification enzyme MnmG"/>
    <property type="match status" value="1"/>
</dbReference>
<dbReference type="FunFam" id="1.10.150.570:FF:000001">
    <property type="entry name" value="tRNA uridine 5-carboxymethylaminomethyl modification enzyme MnmG"/>
    <property type="match status" value="1"/>
</dbReference>
<dbReference type="FunFam" id="3.50.50.60:FF:000002">
    <property type="entry name" value="tRNA uridine 5-carboxymethylaminomethyl modification enzyme MnmG"/>
    <property type="match status" value="1"/>
</dbReference>
<dbReference type="FunFam" id="3.50.50.60:FF:000010">
    <property type="entry name" value="tRNA uridine 5-carboxymethylaminomethyl modification enzyme MnmG"/>
    <property type="match status" value="1"/>
</dbReference>
<dbReference type="Gene3D" id="3.50.50.60">
    <property type="entry name" value="FAD/NAD(P)-binding domain"/>
    <property type="match status" value="2"/>
</dbReference>
<dbReference type="Gene3D" id="1.10.150.570">
    <property type="entry name" value="GidA associated domain, C-terminal subdomain"/>
    <property type="match status" value="1"/>
</dbReference>
<dbReference type="Gene3D" id="1.10.10.1800">
    <property type="entry name" value="tRNA uridine 5-carboxymethylaminomethyl modification enzyme MnmG/GidA"/>
    <property type="match status" value="1"/>
</dbReference>
<dbReference type="HAMAP" id="MF_00129">
    <property type="entry name" value="MnmG_GidA"/>
    <property type="match status" value="1"/>
</dbReference>
<dbReference type="InterPro" id="IPR036188">
    <property type="entry name" value="FAD/NAD-bd_sf"/>
</dbReference>
<dbReference type="InterPro" id="IPR049312">
    <property type="entry name" value="GIDA_C_N"/>
</dbReference>
<dbReference type="InterPro" id="IPR004416">
    <property type="entry name" value="MnmG"/>
</dbReference>
<dbReference type="InterPro" id="IPR002218">
    <property type="entry name" value="MnmG-rel"/>
</dbReference>
<dbReference type="InterPro" id="IPR020595">
    <property type="entry name" value="MnmG-rel_CS"/>
</dbReference>
<dbReference type="InterPro" id="IPR026904">
    <property type="entry name" value="MnmG_C"/>
</dbReference>
<dbReference type="InterPro" id="IPR047001">
    <property type="entry name" value="MnmG_C_subdom"/>
</dbReference>
<dbReference type="InterPro" id="IPR044920">
    <property type="entry name" value="MnmG_C_subdom_sf"/>
</dbReference>
<dbReference type="InterPro" id="IPR040131">
    <property type="entry name" value="MnmG_N"/>
</dbReference>
<dbReference type="NCBIfam" id="TIGR00136">
    <property type="entry name" value="mnmG_gidA"/>
    <property type="match status" value="1"/>
</dbReference>
<dbReference type="PANTHER" id="PTHR11806">
    <property type="entry name" value="GLUCOSE INHIBITED DIVISION PROTEIN A"/>
    <property type="match status" value="1"/>
</dbReference>
<dbReference type="PANTHER" id="PTHR11806:SF0">
    <property type="entry name" value="PROTEIN MTO1 HOMOLOG, MITOCHONDRIAL"/>
    <property type="match status" value="1"/>
</dbReference>
<dbReference type="Pfam" id="PF01134">
    <property type="entry name" value="GIDA"/>
    <property type="match status" value="1"/>
</dbReference>
<dbReference type="Pfam" id="PF21680">
    <property type="entry name" value="GIDA_C_1st"/>
    <property type="match status" value="1"/>
</dbReference>
<dbReference type="Pfam" id="PF13932">
    <property type="entry name" value="SAM_GIDA_C"/>
    <property type="match status" value="1"/>
</dbReference>
<dbReference type="PRINTS" id="PR00411">
    <property type="entry name" value="PNDRDTASEI"/>
</dbReference>
<dbReference type="SMART" id="SM01228">
    <property type="entry name" value="GIDA_assoc_3"/>
    <property type="match status" value="1"/>
</dbReference>
<dbReference type="SUPFAM" id="SSF51905">
    <property type="entry name" value="FAD/NAD(P)-binding domain"/>
    <property type="match status" value="1"/>
</dbReference>
<dbReference type="PROSITE" id="PS01280">
    <property type="entry name" value="GIDA_1"/>
    <property type="match status" value="1"/>
</dbReference>
<dbReference type="PROSITE" id="PS01281">
    <property type="entry name" value="GIDA_2"/>
    <property type="match status" value="1"/>
</dbReference>
<evidence type="ECO:0000255" key="1">
    <source>
        <dbReference type="HAMAP-Rule" id="MF_00129"/>
    </source>
</evidence>
<proteinExistence type="inferred from homology"/>
<comment type="function">
    <text evidence="1">NAD-binding protein involved in the addition of a carboxymethylaminomethyl (cmnm) group at the wobble position (U34) of certain tRNAs, forming tRNA-cmnm(5)s(2)U34.</text>
</comment>
<comment type="cofactor">
    <cofactor evidence="1">
        <name>FAD</name>
        <dbReference type="ChEBI" id="CHEBI:57692"/>
    </cofactor>
</comment>
<comment type="subunit">
    <text evidence="1">Homodimer. Heterotetramer of two MnmE and two MnmG subunits.</text>
</comment>
<comment type="subcellular location">
    <subcellularLocation>
        <location evidence="1">Cytoplasm</location>
    </subcellularLocation>
</comment>
<comment type="similarity">
    <text evidence="1">Belongs to the MnmG family.</text>
</comment>